<evidence type="ECO:0000255" key="1">
    <source>
        <dbReference type="HAMAP-Rule" id="MF_00456"/>
    </source>
</evidence>
<dbReference type="EC" id="2.7.2.11" evidence="1"/>
<dbReference type="EMBL" id="CP000821">
    <property type="protein sequence ID" value="ABV38020.1"/>
    <property type="molecule type" value="Genomic_DNA"/>
</dbReference>
<dbReference type="RefSeq" id="WP_012143750.1">
    <property type="nucleotide sequence ID" value="NC_009831.1"/>
</dbReference>
<dbReference type="SMR" id="A8FYU7"/>
<dbReference type="STRING" id="425104.Ssed_3416"/>
<dbReference type="KEGG" id="sse:Ssed_3416"/>
<dbReference type="eggNOG" id="COG0263">
    <property type="taxonomic scope" value="Bacteria"/>
</dbReference>
<dbReference type="HOGENOM" id="CLU_025400_2_0_6"/>
<dbReference type="OrthoDB" id="9804434at2"/>
<dbReference type="UniPathway" id="UPA00098">
    <property type="reaction ID" value="UER00359"/>
</dbReference>
<dbReference type="Proteomes" id="UP000002015">
    <property type="component" value="Chromosome"/>
</dbReference>
<dbReference type="GO" id="GO:0005829">
    <property type="term" value="C:cytosol"/>
    <property type="evidence" value="ECO:0007669"/>
    <property type="project" value="TreeGrafter"/>
</dbReference>
<dbReference type="GO" id="GO:0005524">
    <property type="term" value="F:ATP binding"/>
    <property type="evidence" value="ECO:0007669"/>
    <property type="project" value="UniProtKB-KW"/>
</dbReference>
<dbReference type="GO" id="GO:0004349">
    <property type="term" value="F:glutamate 5-kinase activity"/>
    <property type="evidence" value="ECO:0007669"/>
    <property type="project" value="UniProtKB-UniRule"/>
</dbReference>
<dbReference type="GO" id="GO:0003723">
    <property type="term" value="F:RNA binding"/>
    <property type="evidence" value="ECO:0007669"/>
    <property type="project" value="InterPro"/>
</dbReference>
<dbReference type="GO" id="GO:0055129">
    <property type="term" value="P:L-proline biosynthetic process"/>
    <property type="evidence" value="ECO:0007669"/>
    <property type="project" value="UniProtKB-UniRule"/>
</dbReference>
<dbReference type="CDD" id="cd04242">
    <property type="entry name" value="AAK_G5K_ProB"/>
    <property type="match status" value="1"/>
</dbReference>
<dbReference type="CDD" id="cd21157">
    <property type="entry name" value="PUA_G5K"/>
    <property type="match status" value="1"/>
</dbReference>
<dbReference type="FunFam" id="2.30.130.10:FF:000007">
    <property type="entry name" value="Glutamate 5-kinase"/>
    <property type="match status" value="1"/>
</dbReference>
<dbReference type="FunFam" id="3.40.1160.10:FF:000006">
    <property type="entry name" value="Glutamate 5-kinase"/>
    <property type="match status" value="1"/>
</dbReference>
<dbReference type="Gene3D" id="3.40.1160.10">
    <property type="entry name" value="Acetylglutamate kinase-like"/>
    <property type="match status" value="2"/>
</dbReference>
<dbReference type="Gene3D" id="2.30.130.10">
    <property type="entry name" value="PUA domain"/>
    <property type="match status" value="1"/>
</dbReference>
<dbReference type="HAMAP" id="MF_00456">
    <property type="entry name" value="ProB"/>
    <property type="match status" value="1"/>
</dbReference>
<dbReference type="InterPro" id="IPR036393">
    <property type="entry name" value="AceGlu_kinase-like_sf"/>
</dbReference>
<dbReference type="InterPro" id="IPR001048">
    <property type="entry name" value="Asp/Glu/Uridylate_kinase"/>
</dbReference>
<dbReference type="InterPro" id="IPR041739">
    <property type="entry name" value="G5K_ProB"/>
</dbReference>
<dbReference type="InterPro" id="IPR001057">
    <property type="entry name" value="Glu/AcGlu_kinase"/>
</dbReference>
<dbReference type="InterPro" id="IPR011529">
    <property type="entry name" value="Glu_5kinase"/>
</dbReference>
<dbReference type="InterPro" id="IPR005715">
    <property type="entry name" value="Glu_5kinase/COase_Synthase"/>
</dbReference>
<dbReference type="InterPro" id="IPR019797">
    <property type="entry name" value="Glutamate_5-kinase_CS"/>
</dbReference>
<dbReference type="InterPro" id="IPR002478">
    <property type="entry name" value="PUA"/>
</dbReference>
<dbReference type="InterPro" id="IPR015947">
    <property type="entry name" value="PUA-like_sf"/>
</dbReference>
<dbReference type="InterPro" id="IPR036974">
    <property type="entry name" value="PUA_sf"/>
</dbReference>
<dbReference type="NCBIfam" id="TIGR01027">
    <property type="entry name" value="proB"/>
    <property type="match status" value="1"/>
</dbReference>
<dbReference type="PANTHER" id="PTHR43654">
    <property type="entry name" value="GLUTAMATE 5-KINASE"/>
    <property type="match status" value="1"/>
</dbReference>
<dbReference type="PANTHER" id="PTHR43654:SF1">
    <property type="entry name" value="ISOPENTENYL PHOSPHATE KINASE"/>
    <property type="match status" value="1"/>
</dbReference>
<dbReference type="Pfam" id="PF00696">
    <property type="entry name" value="AA_kinase"/>
    <property type="match status" value="1"/>
</dbReference>
<dbReference type="Pfam" id="PF01472">
    <property type="entry name" value="PUA"/>
    <property type="match status" value="1"/>
</dbReference>
<dbReference type="PIRSF" id="PIRSF000729">
    <property type="entry name" value="GK"/>
    <property type="match status" value="1"/>
</dbReference>
<dbReference type="PRINTS" id="PR00474">
    <property type="entry name" value="GLU5KINASE"/>
</dbReference>
<dbReference type="SMART" id="SM00359">
    <property type="entry name" value="PUA"/>
    <property type="match status" value="1"/>
</dbReference>
<dbReference type="SUPFAM" id="SSF53633">
    <property type="entry name" value="Carbamate kinase-like"/>
    <property type="match status" value="1"/>
</dbReference>
<dbReference type="SUPFAM" id="SSF88697">
    <property type="entry name" value="PUA domain-like"/>
    <property type="match status" value="1"/>
</dbReference>
<dbReference type="PROSITE" id="PS00902">
    <property type="entry name" value="GLUTAMATE_5_KINASE"/>
    <property type="match status" value="1"/>
</dbReference>
<dbReference type="PROSITE" id="PS50890">
    <property type="entry name" value="PUA"/>
    <property type="match status" value="1"/>
</dbReference>
<feature type="chain" id="PRO_1000081108" description="Glutamate 5-kinase">
    <location>
        <begin position="1"/>
        <end position="372"/>
    </location>
</feature>
<feature type="domain" description="PUA" evidence="1">
    <location>
        <begin position="280"/>
        <end position="358"/>
    </location>
</feature>
<feature type="binding site" evidence="1">
    <location>
        <position position="14"/>
    </location>
    <ligand>
        <name>ATP</name>
        <dbReference type="ChEBI" id="CHEBI:30616"/>
    </ligand>
</feature>
<feature type="binding site" evidence="1">
    <location>
        <position position="54"/>
    </location>
    <ligand>
        <name>substrate</name>
    </ligand>
</feature>
<feature type="binding site" evidence="1">
    <location>
        <position position="141"/>
    </location>
    <ligand>
        <name>substrate</name>
    </ligand>
</feature>
<feature type="binding site" evidence="1">
    <location>
        <position position="153"/>
    </location>
    <ligand>
        <name>substrate</name>
    </ligand>
</feature>
<feature type="binding site" evidence="1">
    <location>
        <begin position="173"/>
        <end position="174"/>
    </location>
    <ligand>
        <name>ATP</name>
        <dbReference type="ChEBI" id="CHEBI:30616"/>
    </ligand>
</feature>
<feature type="binding site" evidence="1">
    <location>
        <begin position="215"/>
        <end position="221"/>
    </location>
    <ligand>
        <name>ATP</name>
        <dbReference type="ChEBI" id="CHEBI:30616"/>
    </ligand>
</feature>
<sequence length="372" mass="39996">MNLSEIGYRRVVVKLGTSVLTSGSRQLDKAHMVELARQMAALMKAGVEVVLCTSGAIAAGREHLGYPELPDTVANKQLLAAVGQSQLILAWAQLFSIYGLHVGQLLLTRADLHDRERYLNARDSLNALLAQGIIPIINENDAVATNEIKVGDNDNLSARAALLCDADLLILLTDQRGLFDADPRSNPDAKLIKQVVNIDDSLRLLAGGAVSGLGTGGMATKLEAADIARRAGVEVIIASGHHPRVIQDAVCKESVGTHFTALENPLESRKQWILAGQATRGKLILDQGALNAVTQKGRSLLSKGIVRVEGKFERGATLHLVDSDGREFARGMSRYSAKDLHLIAGKHSDDIESLLGYDYGDAVVHRNDMVVL</sequence>
<gene>
    <name evidence="1" type="primary">proB</name>
    <name type="ordered locus">Ssed_3416</name>
</gene>
<accession>A8FYU7</accession>
<reference key="1">
    <citation type="submission" date="2007-08" db="EMBL/GenBank/DDBJ databases">
        <title>Complete sequence of Shewanella sediminis HAW-EB3.</title>
        <authorList>
            <consortium name="US DOE Joint Genome Institute"/>
            <person name="Copeland A."/>
            <person name="Lucas S."/>
            <person name="Lapidus A."/>
            <person name="Barry K."/>
            <person name="Glavina del Rio T."/>
            <person name="Dalin E."/>
            <person name="Tice H."/>
            <person name="Pitluck S."/>
            <person name="Chertkov O."/>
            <person name="Brettin T."/>
            <person name="Bruce D."/>
            <person name="Detter J.C."/>
            <person name="Han C."/>
            <person name="Schmutz J."/>
            <person name="Larimer F."/>
            <person name="Land M."/>
            <person name="Hauser L."/>
            <person name="Kyrpides N."/>
            <person name="Kim E."/>
            <person name="Zhao J.-S."/>
            <person name="Richardson P."/>
        </authorList>
    </citation>
    <scope>NUCLEOTIDE SEQUENCE [LARGE SCALE GENOMIC DNA]</scope>
    <source>
        <strain>HAW-EB3</strain>
    </source>
</reference>
<proteinExistence type="inferred from homology"/>
<protein>
    <recommendedName>
        <fullName evidence="1">Glutamate 5-kinase</fullName>
        <ecNumber evidence="1">2.7.2.11</ecNumber>
    </recommendedName>
    <alternativeName>
        <fullName evidence="1">Gamma-glutamyl kinase</fullName>
        <shortName evidence="1">GK</shortName>
    </alternativeName>
</protein>
<comment type="function">
    <text evidence="1">Catalyzes the transfer of a phosphate group to glutamate to form L-glutamate 5-phosphate.</text>
</comment>
<comment type="catalytic activity">
    <reaction evidence="1">
        <text>L-glutamate + ATP = L-glutamyl 5-phosphate + ADP</text>
        <dbReference type="Rhea" id="RHEA:14877"/>
        <dbReference type="ChEBI" id="CHEBI:29985"/>
        <dbReference type="ChEBI" id="CHEBI:30616"/>
        <dbReference type="ChEBI" id="CHEBI:58274"/>
        <dbReference type="ChEBI" id="CHEBI:456216"/>
        <dbReference type="EC" id="2.7.2.11"/>
    </reaction>
</comment>
<comment type="pathway">
    <text evidence="1">Amino-acid biosynthesis; L-proline biosynthesis; L-glutamate 5-semialdehyde from L-glutamate: step 1/2.</text>
</comment>
<comment type="subcellular location">
    <subcellularLocation>
        <location evidence="1">Cytoplasm</location>
    </subcellularLocation>
</comment>
<comment type="similarity">
    <text evidence="1">Belongs to the glutamate 5-kinase family.</text>
</comment>
<name>PROB_SHESH</name>
<organism>
    <name type="scientific">Shewanella sediminis (strain HAW-EB3)</name>
    <dbReference type="NCBI Taxonomy" id="425104"/>
    <lineage>
        <taxon>Bacteria</taxon>
        <taxon>Pseudomonadati</taxon>
        <taxon>Pseudomonadota</taxon>
        <taxon>Gammaproteobacteria</taxon>
        <taxon>Alteromonadales</taxon>
        <taxon>Shewanellaceae</taxon>
        <taxon>Shewanella</taxon>
    </lineage>
</organism>
<keyword id="KW-0028">Amino-acid biosynthesis</keyword>
<keyword id="KW-0067">ATP-binding</keyword>
<keyword id="KW-0963">Cytoplasm</keyword>
<keyword id="KW-0418">Kinase</keyword>
<keyword id="KW-0547">Nucleotide-binding</keyword>
<keyword id="KW-0641">Proline biosynthesis</keyword>
<keyword id="KW-1185">Reference proteome</keyword>
<keyword id="KW-0808">Transferase</keyword>